<protein>
    <recommendedName>
        <fullName>Phosphoribulokinase, chloroplastic</fullName>
        <shortName>PRK</shortName>
        <shortName>PRKase</shortName>
        <ecNumber>2.7.1.19</ecNumber>
    </recommendedName>
    <alternativeName>
        <fullName>Phosphopentokinase</fullName>
    </alternativeName>
</protein>
<sequence length="397" mass="44114">MAVSAYTVPTTSHLGFNQKKQLFFCNKSAYKRVSFSSRPCVITCLAGDSQTIVIGLAADSGCGKSTFMRRLTSVFGGAAEPPRGGNPDSNTLISDTTTVICLDDYHSLDRTGRKEKGVTALDPRANDFDLMYEQVKALKEGKAVEKPIYNHVTGLLDAPELIKPPKILVIEGLHPMFDSRVRDLLDFSIYLDISNEVKFAWKIQRDMAERGHSLESIKASIEARKPDFDAYIDPQKQYADAVIEVLPTQLIPGDNEGKVLRVRLIQKEGVQYFSPVYLFDEGSSITWIPCGRKLTCSYPGIKFFYGPDTYFGNEVTVLEMDGQFDRLDELIYVESHLSNLSTKFYGEVTQQMLKHQDFPGSNNGTGLFQTIVGLKIRDLFEQLIASKTAAPAAATKA</sequence>
<name>KPPR_MESCR</name>
<reference key="1">
    <citation type="submission" date="1991-07" db="EMBL/GenBank/DDBJ databases">
        <title>Phosphoribulokinase from ice plant: transcription, transcripts and protein expression during environmental stress.</title>
        <authorList>
            <person name="Michalowski C.B."/>
            <person name="Derocher E.J."/>
            <person name="Bohnert H.J."/>
            <person name="Salvucci M.E."/>
        </authorList>
    </citation>
    <scope>NUCLEOTIDE SEQUENCE [MRNA]</scope>
</reference>
<evidence type="ECO:0000250" key="1"/>
<evidence type="ECO:0000305" key="2"/>
<feature type="transit peptide" description="Chloroplast" evidence="1">
    <location>
        <begin position="1"/>
        <end position="44"/>
    </location>
</feature>
<feature type="chain" id="PRO_0000025753" description="Phosphoribulokinase, chloroplastic">
    <location>
        <begin position="45"/>
        <end position="397"/>
    </location>
</feature>
<feature type="disulfide bond" evidence="1">
    <location>
        <begin position="62"/>
        <end position="101"/>
    </location>
</feature>
<proteinExistence type="evidence at transcript level"/>
<keyword id="KW-0067">ATP-binding</keyword>
<keyword id="KW-0113">Calvin cycle</keyword>
<keyword id="KW-0150">Chloroplast</keyword>
<keyword id="KW-1015">Disulfide bond</keyword>
<keyword id="KW-0418">Kinase</keyword>
<keyword id="KW-0547">Nucleotide-binding</keyword>
<keyword id="KW-0602">Photosynthesis</keyword>
<keyword id="KW-0934">Plastid</keyword>
<keyword id="KW-0808">Transferase</keyword>
<keyword id="KW-0809">Transit peptide</keyword>
<dbReference type="EC" id="2.7.1.19"/>
<dbReference type="EMBL" id="M73707">
    <property type="protein sequence ID" value="AAA33034.1"/>
    <property type="molecule type" value="mRNA"/>
</dbReference>
<dbReference type="PIR" id="T12436">
    <property type="entry name" value="T12436"/>
</dbReference>
<dbReference type="SMR" id="P27774"/>
<dbReference type="UniPathway" id="UPA00116"/>
<dbReference type="GO" id="GO:0009507">
    <property type="term" value="C:chloroplast"/>
    <property type="evidence" value="ECO:0007669"/>
    <property type="project" value="UniProtKB-SubCell"/>
</dbReference>
<dbReference type="GO" id="GO:0005524">
    <property type="term" value="F:ATP binding"/>
    <property type="evidence" value="ECO:0007669"/>
    <property type="project" value="UniProtKB-KW"/>
</dbReference>
<dbReference type="GO" id="GO:0008974">
    <property type="term" value="F:phosphoribulokinase activity"/>
    <property type="evidence" value="ECO:0007669"/>
    <property type="project" value="UniProtKB-EC"/>
</dbReference>
<dbReference type="GO" id="GO:0019253">
    <property type="term" value="P:reductive pentose-phosphate cycle"/>
    <property type="evidence" value="ECO:0007669"/>
    <property type="project" value="UniProtKB-UniPathway"/>
</dbReference>
<dbReference type="CDD" id="cd02026">
    <property type="entry name" value="PRK"/>
    <property type="match status" value="1"/>
</dbReference>
<dbReference type="FunFam" id="3.40.50.300:FF:000619">
    <property type="entry name" value="Phosphoribulokinase"/>
    <property type="match status" value="1"/>
</dbReference>
<dbReference type="Gene3D" id="3.40.50.300">
    <property type="entry name" value="P-loop containing nucleotide triphosphate hydrolases"/>
    <property type="match status" value="1"/>
</dbReference>
<dbReference type="InterPro" id="IPR027417">
    <property type="entry name" value="P-loop_NTPase"/>
</dbReference>
<dbReference type="InterPro" id="IPR006082">
    <property type="entry name" value="PRK"/>
</dbReference>
<dbReference type="InterPro" id="IPR006083">
    <property type="entry name" value="PRK/URK"/>
</dbReference>
<dbReference type="NCBIfam" id="NF005655">
    <property type="entry name" value="PRK07429.1"/>
    <property type="match status" value="1"/>
</dbReference>
<dbReference type="PANTHER" id="PTHR10285">
    <property type="entry name" value="URIDINE KINASE"/>
    <property type="match status" value="1"/>
</dbReference>
<dbReference type="Pfam" id="PF00485">
    <property type="entry name" value="PRK"/>
    <property type="match status" value="1"/>
</dbReference>
<dbReference type="PRINTS" id="PR00478">
    <property type="entry name" value="PHRIBLKINASE"/>
</dbReference>
<dbReference type="SUPFAM" id="SSF52540">
    <property type="entry name" value="P-loop containing nucleoside triphosphate hydrolases"/>
    <property type="match status" value="1"/>
</dbReference>
<dbReference type="PROSITE" id="PS00567">
    <property type="entry name" value="PHOSPHORIBULOKINASE"/>
    <property type="match status" value="1"/>
</dbReference>
<comment type="catalytic activity">
    <reaction>
        <text>D-ribulose 5-phosphate + ATP = D-ribulose 1,5-bisphosphate + ADP + H(+)</text>
        <dbReference type="Rhea" id="RHEA:19365"/>
        <dbReference type="ChEBI" id="CHEBI:15378"/>
        <dbReference type="ChEBI" id="CHEBI:30616"/>
        <dbReference type="ChEBI" id="CHEBI:57870"/>
        <dbReference type="ChEBI" id="CHEBI:58121"/>
        <dbReference type="ChEBI" id="CHEBI:456216"/>
        <dbReference type="EC" id="2.7.1.19"/>
    </reaction>
</comment>
<comment type="activity regulation">
    <text>Light regulated via thioredoxin by reversible oxidation/reduction of sulfhydryl/disulfide groups.</text>
</comment>
<comment type="pathway">
    <text>Carbohydrate biosynthesis; Calvin cycle.</text>
</comment>
<comment type="subcellular location">
    <subcellularLocation>
        <location>Plastid</location>
        <location>Chloroplast</location>
    </subcellularLocation>
</comment>
<comment type="similarity">
    <text evidence="2">Belongs to the phosphoribulokinase family.</text>
</comment>
<accession>P27774</accession>
<organism>
    <name type="scientific">Mesembryanthemum crystallinum</name>
    <name type="common">Common ice plant</name>
    <name type="synonym">Cryophytum crystallinum</name>
    <dbReference type="NCBI Taxonomy" id="3544"/>
    <lineage>
        <taxon>Eukaryota</taxon>
        <taxon>Viridiplantae</taxon>
        <taxon>Streptophyta</taxon>
        <taxon>Embryophyta</taxon>
        <taxon>Tracheophyta</taxon>
        <taxon>Spermatophyta</taxon>
        <taxon>Magnoliopsida</taxon>
        <taxon>eudicotyledons</taxon>
        <taxon>Gunneridae</taxon>
        <taxon>Pentapetalae</taxon>
        <taxon>Caryophyllales</taxon>
        <taxon>Aizoaceae</taxon>
        <taxon>Mesembryanthemum</taxon>
        <taxon>Mesembryanthemum subgen. Cryophytum</taxon>
    </lineage>
</organism>